<comment type="similarity">
    <text evidence="1">Belongs to the UPF0173 family.</text>
</comment>
<proteinExistence type="evidence at protein level"/>
<reference key="1">
    <citation type="journal article" date="2008" name="Genome Biol.">
        <title>A genomic analysis of the archaeal system Ignicoccus hospitalis-Nanoarchaeum equitans.</title>
        <authorList>
            <person name="Podar M."/>
            <person name="Anderson I."/>
            <person name="Makarova K.S."/>
            <person name="Elkins J.G."/>
            <person name="Ivanova N."/>
            <person name="Wall M.A."/>
            <person name="Lykidis A."/>
            <person name="Mavromatis K."/>
            <person name="Sun H."/>
            <person name="Hudson M.E."/>
            <person name="Chen W."/>
            <person name="Deciu C."/>
            <person name="Hutchison D."/>
            <person name="Eads J.R."/>
            <person name="Anderson A."/>
            <person name="Fernandes F."/>
            <person name="Szeto E."/>
            <person name="Lapidus A."/>
            <person name="Kyrpides N.C."/>
            <person name="Saier M.H. Jr."/>
            <person name="Richardson P.M."/>
            <person name="Rachel R."/>
            <person name="Huber H."/>
            <person name="Eisen J.A."/>
            <person name="Koonin E.V."/>
            <person name="Keller M."/>
            <person name="Stetter K.O."/>
        </authorList>
    </citation>
    <scope>NUCLEOTIDE SEQUENCE [LARGE SCALE GENOMIC DNA]</scope>
    <source>
        <strain>KIN4/I / DSM 18386 / JCM 14125</strain>
    </source>
</reference>
<accession>A8ABX8</accession>
<name>Y1254_IGNH4</name>
<gene>
    <name type="ordered locus">Igni_1254</name>
</gene>
<feature type="chain" id="PRO_0000367228" description="UPF0173 metal-dependent hydrolase Igni_1254">
    <location>
        <begin position="1"/>
        <end position="233"/>
    </location>
</feature>
<feature type="strand" evidence="2">
    <location>
        <begin position="3"/>
        <end position="8"/>
    </location>
</feature>
<feature type="strand" evidence="2">
    <location>
        <begin position="14"/>
        <end position="20"/>
    </location>
</feature>
<feature type="strand" evidence="2">
    <location>
        <begin position="22"/>
        <end position="26"/>
    </location>
</feature>
<feature type="helix" evidence="2">
    <location>
        <begin position="38"/>
        <end position="44"/>
    </location>
</feature>
<feature type="strand" evidence="2">
    <location>
        <begin position="48"/>
        <end position="51"/>
    </location>
</feature>
<feature type="helix" evidence="2">
    <location>
        <begin position="57"/>
        <end position="60"/>
    </location>
</feature>
<feature type="helix" evidence="2">
    <location>
        <begin position="63"/>
        <end position="70"/>
    </location>
</feature>
<feature type="strand" evidence="2">
    <location>
        <begin position="73"/>
        <end position="77"/>
    </location>
</feature>
<feature type="helix" evidence="2">
    <location>
        <begin position="78"/>
        <end position="86"/>
    </location>
</feature>
<feature type="strand" evidence="2">
    <location>
        <begin position="91"/>
        <end position="94"/>
    </location>
</feature>
<feature type="strand" evidence="2">
    <location>
        <begin position="96"/>
        <end position="98"/>
    </location>
</feature>
<feature type="turn" evidence="2">
    <location>
        <begin position="103"/>
        <end position="105"/>
    </location>
</feature>
<feature type="strand" evidence="2">
    <location>
        <begin position="109"/>
        <end position="114"/>
    </location>
</feature>
<feature type="strand" evidence="2">
    <location>
        <begin position="128"/>
        <end position="133"/>
    </location>
</feature>
<feature type="strand" evidence="2">
    <location>
        <begin position="136"/>
        <end position="141"/>
    </location>
</feature>
<feature type="helix" evidence="2">
    <location>
        <begin position="151"/>
        <end position="158"/>
    </location>
</feature>
<feature type="strand" evidence="2">
    <location>
        <begin position="161"/>
        <end position="166"/>
    </location>
</feature>
<feature type="strand" evidence="2">
    <location>
        <begin position="170"/>
        <end position="172"/>
    </location>
</feature>
<feature type="helix" evidence="2">
    <location>
        <begin position="175"/>
        <end position="185"/>
    </location>
</feature>
<feature type="strand" evidence="2">
    <location>
        <begin position="188"/>
        <end position="194"/>
    </location>
</feature>
<feature type="strand" evidence="2">
    <location>
        <begin position="196"/>
        <end position="198"/>
    </location>
</feature>
<feature type="helix" evidence="2">
    <location>
        <begin position="199"/>
        <end position="201"/>
    </location>
</feature>
<feature type="helix" evidence="2">
    <location>
        <begin position="205"/>
        <end position="214"/>
    </location>
</feature>
<feature type="strand" evidence="2">
    <location>
        <begin position="228"/>
        <end position="232"/>
    </location>
</feature>
<evidence type="ECO:0000255" key="1">
    <source>
        <dbReference type="HAMAP-Rule" id="MF_00457"/>
    </source>
</evidence>
<evidence type="ECO:0007829" key="2">
    <source>
        <dbReference type="PDB" id="6HRG"/>
    </source>
</evidence>
<protein>
    <recommendedName>
        <fullName evidence="1">UPF0173 metal-dependent hydrolase Igni_1254</fullName>
    </recommendedName>
</protein>
<sequence length="233" mass="25437">MTTVKLTYFGHSAFHVEVDGVGIAIDPWITNPLSKTTLEDYLKNFKTDLVVITHAHEDHIGDALEIMRRTGAKFFSIHEIYVDLTQKGFQGIGANIGGPAKLDDVAPGLGIALTPATHSSYDKGVPTGAIIFKDGKALVYHAGDTGLFAEMQFIGELYAPKVALLPIGGHYTMDIEQALLATKLLRPEVVVPMHYNTFPPIRADPNEFKQKVESAGLAKVRVMEPGETVTFEF</sequence>
<keyword id="KW-0002">3D-structure</keyword>
<keyword id="KW-0378">Hydrolase</keyword>
<keyword id="KW-1185">Reference proteome</keyword>
<organism>
    <name type="scientific">Ignicoccus hospitalis (strain KIN4/I / DSM 18386 / JCM 14125)</name>
    <dbReference type="NCBI Taxonomy" id="453591"/>
    <lineage>
        <taxon>Archaea</taxon>
        <taxon>Thermoproteota</taxon>
        <taxon>Thermoprotei</taxon>
        <taxon>Desulfurococcales</taxon>
        <taxon>Desulfurococcaceae</taxon>
        <taxon>Ignicoccus</taxon>
    </lineage>
</organism>
<dbReference type="EMBL" id="CP000816">
    <property type="protein sequence ID" value="ABU82430.1"/>
    <property type="molecule type" value="Genomic_DNA"/>
</dbReference>
<dbReference type="RefSeq" id="WP_012123394.1">
    <property type="nucleotide sequence ID" value="NC_009776.1"/>
</dbReference>
<dbReference type="PDB" id="6HRG">
    <property type="method" value="X-ray"/>
    <property type="resolution" value="2.12 A"/>
    <property type="chains" value="A=1-233"/>
</dbReference>
<dbReference type="PDBsum" id="6HRG"/>
<dbReference type="SMR" id="A8ABX8"/>
<dbReference type="STRING" id="453591.Igni_1254"/>
<dbReference type="GeneID" id="5562727"/>
<dbReference type="KEGG" id="iho:Igni_1254"/>
<dbReference type="eggNOG" id="arCOG00497">
    <property type="taxonomic scope" value="Archaea"/>
</dbReference>
<dbReference type="HOGENOM" id="CLU_070010_4_0_2"/>
<dbReference type="OrthoDB" id="28313at2157"/>
<dbReference type="PhylomeDB" id="A8ABX8"/>
<dbReference type="Proteomes" id="UP000000262">
    <property type="component" value="Chromosome"/>
</dbReference>
<dbReference type="GO" id="GO:0016787">
    <property type="term" value="F:hydrolase activity"/>
    <property type="evidence" value="ECO:0007669"/>
    <property type="project" value="UniProtKB-UniRule"/>
</dbReference>
<dbReference type="Gene3D" id="3.60.15.10">
    <property type="entry name" value="Ribonuclease Z/Hydroxyacylglutathione hydrolase-like"/>
    <property type="match status" value="1"/>
</dbReference>
<dbReference type="HAMAP" id="MF_00457">
    <property type="entry name" value="UPF0173"/>
    <property type="match status" value="1"/>
</dbReference>
<dbReference type="InterPro" id="IPR001279">
    <property type="entry name" value="Metallo-B-lactamas"/>
</dbReference>
<dbReference type="InterPro" id="IPR036866">
    <property type="entry name" value="RibonucZ/Hydroxyglut_hydro"/>
</dbReference>
<dbReference type="InterPro" id="IPR022877">
    <property type="entry name" value="UPF0173"/>
</dbReference>
<dbReference type="InterPro" id="IPR050114">
    <property type="entry name" value="UPF0173_UPF0282_UlaG_hydrolase"/>
</dbReference>
<dbReference type="NCBIfam" id="NF001911">
    <property type="entry name" value="PRK00685.1"/>
    <property type="match status" value="1"/>
</dbReference>
<dbReference type="PANTHER" id="PTHR43546:SF3">
    <property type="entry name" value="UPF0173 METAL-DEPENDENT HYDROLASE MJ1163"/>
    <property type="match status" value="1"/>
</dbReference>
<dbReference type="PANTHER" id="PTHR43546">
    <property type="entry name" value="UPF0173 METAL-DEPENDENT HYDROLASE MJ1163-RELATED"/>
    <property type="match status" value="1"/>
</dbReference>
<dbReference type="Pfam" id="PF13483">
    <property type="entry name" value="Lactamase_B_3"/>
    <property type="match status" value="1"/>
</dbReference>
<dbReference type="SMART" id="SM00849">
    <property type="entry name" value="Lactamase_B"/>
    <property type="match status" value="1"/>
</dbReference>
<dbReference type="SUPFAM" id="SSF56281">
    <property type="entry name" value="Metallo-hydrolase/oxidoreductase"/>
    <property type="match status" value="1"/>
</dbReference>